<sequence>MVRLVITYDIRKDKIRNKLFRLLERYGAWKQYSVFELEINPVHKVELFHSIADLIEDTDRVRIYDLCERCQGKITELGEVSPDKMQVVI</sequence>
<name>CAS2B_METHJ</name>
<organism>
    <name type="scientific">Methanospirillum hungatei JF-1 (strain ATCC 27890 / DSM 864 / NBRC 100397 / JF-1)</name>
    <dbReference type="NCBI Taxonomy" id="323259"/>
    <lineage>
        <taxon>Archaea</taxon>
        <taxon>Methanobacteriati</taxon>
        <taxon>Methanobacteriota</taxon>
        <taxon>Stenosarchaea group</taxon>
        <taxon>Methanomicrobia</taxon>
        <taxon>Methanomicrobiales</taxon>
        <taxon>Methanospirillaceae</taxon>
        <taxon>Methanospirillum</taxon>
    </lineage>
</organism>
<dbReference type="EC" id="3.1.-.-" evidence="1"/>
<dbReference type="EMBL" id="CP000254">
    <property type="protein sequence ID" value="ABD41574.1"/>
    <property type="molecule type" value="Genomic_DNA"/>
</dbReference>
<dbReference type="RefSeq" id="WP_011448838.1">
    <property type="nucleotide sequence ID" value="NC_007796.1"/>
</dbReference>
<dbReference type="SMR" id="Q2FQQ4"/>
<dbReference type="STRING" id="323259.Mhun_1857"/>
<dbReference type="EnsemblBacteria" id="ABD41574">
    <property type="protein sequence ID" value="ABD41574"/>
    <property type="gene ID" value="Mhun_1857"/>
</dbReference>
<dbReference type="GeneID" id="3922651"/>
<dbReference type="KEGG" id="mhu:Mhun_1857"/>
<dbReference type="eggNOG" id="arCOG04194">
    <property type="taxonomic scope" value="Archaea"/>
</dbReference>
<dbReference type="HOGENOM" id="CLU_161124_3_0_2"/>
<dbReference type="InParanoid" id="Q2FQQ4"/>
<dbReference type="OrthoDB" id="75992at2157"/>
<dbReference type="Proteomes" id="UP000001941">
    <property type="component" value="Chromosome"/>
</dbReference>
<dbReference type="GO" id="GO:0046872">
    <property type="term" value="F:metal ion binding"/>
    <property type="evidence" value="ECO:0007669"/>
    <property type="project" value="UniProtKB-UniRule"/>
</dbReference>
<dbReference type="GO" id="GO:0004521">
    <property type="term" value="F:RNA endonuclease activity"/>
    <property type="evidence" value="ECO:0007669"/>
    <property type="project" value="InterPro"/>
</dbReference>
<dbReference type="GO" id="GO:0051607">
    <property type="term" value="P:defense response to virus"/>
    <property type="evidence" value="ECO:0007669"/>
    <property type="project" value="UniProtKB-UniRule"/>
</dbReference>
<dbReference type="GO" id="GO:0043571">
    <property type="term" value="P:maintenance of CRISPR repeat elements"/>
    <property type="evidence" value="ECO:0007669"/>
    <property type="project" value="UniProtKB-UniRule"/>
</dbReference>
<dbReference type="CDD" id="cd09725">
    <property type="entry name" value="Cas2_I_II_III"/>
    <property type="match status" value="1"/>
</dbReference>
<dbReference type="Gene3D" id="3.30.70.240">
    <property type="match status" value="1"/>
</dbReference>
<dbReference type="HAMAP" id="MF_01471">
    <property type="entry name" value="Cas2"/>
    <property type="match status" value="1"/>
</dbReference>
<dbReference type="InterPro" id="IPR021127">
    <property type="entry name" value="CRISPR_associated_Cas2"/>
</dbReference>
<dbReference type="InterPro" id="IPR019199">
    <property type="entry name" value="Virulence_VapD/CRISPR_Cas2"/>
</dbReference>
<dbReference type="NCBIfam" id="TIGR01573">
    <property type="entry name" value="cas2"/>
    <property type="match status" value="1"/>
</dbReference>
<dbReference type="PANTHER" id="PTHR34405">
    <property type="entry name" value="CRISPR-ASSOCIATED ENDORIBONUCLEASE CAS2"/>
    <property type="match status" value="1"/>
</dbReference>
<dbReference type="PANTHER" id="PTHR34405:SF3">
    <property type="entry name" value="CRISPR-ASSOCIATED ENDORIBONUCLEASE CAS2 3"/>
    <property type="match status" value="1"/>
</dbReference>
<dbReference type="Pfam" id="PF09827">
    <property type="entry name" value="CRISPR_Cas2"/>
    <property type="match status" value="1"/>
</dbReference>
<dbReference type="SUPFAM" id="SSF143430">
    <property type="entry name" value="TTP0101/SSO1404-like"/>
    <property type="match status" value="1"/>
</dbReference>
<comment type="function">
    <text evidence="1">CRISPR (clustered regularly interspaced short palindromic repeat), is an adaptive immune system that provides protection against mobile genetic elements (viruses, transposable elements and conjugative plasmids). CRISPR clusters contain sequences complementary to antecedent mobile elements and target invading nucleic acids. CRISPR clusters are transcribed and processed into CRISPR RNA (crRNA). Functions as a ssRNA-specific endoribonuclease. Involved in the integration of spacer DNA into the CRISPR cassette.</text>
</comment>
<comment type="cofactor">
    <cofactor evidence="1">
        <name>Mg(2+)</name>
        <dbReference type="ChEBI" id="CHEBI:18420"/>
    </cofactor>
</comment>
<comment type="subunit">
    <text evidence="1">Homodimer, forms a heterotetramer with a Cas1 homodimer.</text>
</comment>
<comment type="similarity">
    <text evidence="1">Belongs to the CRISPR-associated endoribonuclease Cas2 protein family.</text>
</comment>
<accession>Q2FQQ4</accession>
<feature type="chain" id="PRO_0000417746" description="CRISPR-associated endoribonuclease Cas2 2">
    <location>
        <begin position="1"/>
        <end position="89"/>
    </location>
</feature>
<feature type="binding site" evidence="1">
    <location>
        <position position="9"/>
    </location>
    <ligand>
        <name>Mg(2+)</name>
        <dbReference type="ChEBI" id="CHEBI:18420"/>
        <note>catalytic</note>
    </ligand>
</feature>
<proteinExistence type="inferred from homology"/>
<reference key="1">
    <citation type="journal article" date="2016" name="Stand. Genomic Sci.">
        <title>Complete genome sequence of Methanospirillum hungatei type strain JF1.</title>
        <authorList>
            <person name="Gunsalus R.P."/>
            <person name="Cook L.E."/>
            <person name="Crable B."/>
            <person name="Rohlin L."/>
            <person name="McDonald E."/>
            <person name="Mouttaki H."/>
            <person name="Sieber J.R."/>
            <person name="Poweleit N."/>
            <person name="Zhou H."/>
            <person name="Lapidus A.L."/>
            <person name="Daligault H.E."/>
            <person name="Land M."/>
            <person name="Gilna P."/>
            <person name="Ivanova N."/>
            <person name="Kyrpides N."/>
            <person name="Culley D.E."/>
            <person name="McInerney M.J."/>
        </authorList>
    </citation>
    <scope>NUCLEOTIDE SEQUENCE [LARGE SCALE GENOMIC DNA]</scope>
    <source>
        <strain>ATCC 27890 / DSM 864 / NBRC 100397 / JF-1</strain>
    </source>
</reference>
<protein>
    <recommendedName>
        <fullName evidence="1">CRISPR-associated endoribonuclease Cas2 2</fullName>
        <ecNumber evidence="1">3.1.-.-</ecNumber>
    </recommendedName>
</protein>
<gene>
    <name evidence="1" type="primary">cas2-2</name>
    <name type="ordered locus">Mhun_1857</name>
</gene>
<evidence type="ECO:0000255" key="1">
    <source>
        <dbReference type="HAMAP-Rule" id="MF_01471"/>
    </source>
</evidence>
<keyword id="KW-0051">Antiviral defense</keyword>
<keyword id="KW-0255">Endonuclease</keyword>
<keyword id="KW-0378">Hydrolase</keyword>
<keyword id="KW-0460">Magnesium</keyword>
<keyword id="KW-0479">Metal-binding</keyword>
<keyword id="KW-0540">Nuclease</keyword>
<keyword id="KW-1185">Reference proteome</keyword>